<dbReference type="EC" id="3.1.-.-" evidence="1"/>
<dbReference type="EC" id="3.6.4.-" evidence="1"/>
<dbReference type="EMBL" id="FM204883">
    <property type="protein sequence ID" value="CAW92550.1"/>
    <property type="molecule type" value="Genomic_DNA"/>
</dbReference>
<dbReference type="RefSeq" id="WP_012679025.1">
    <property type="nucleotide sequence ID" value="NC_012471.1"/>
</dbReference>
<dbReference type="SMR" id="C0MAV6"/>
<dbReference type="KEGG" id="seu:SEQ_0399"/>
<dbReference type="HOGENOM" id="CLU_011252_2_1_9"/>
<dbReference type="OrthoDB" id="9808166at2"/>
<dbReference type="Proteomes" id="UP000001365">
    <property type="component" value="Chromosome"/>
</dbReference>
<dbReference type="GO" id="GO:0005524">
    <property type="term" value="F:ATP binding"/>
    <property type="evidence" value="ECO:0007669"/>
    <property type="project" value="UniProtKB-UniRule"/>
</dbReference>
<dbReference type="GO" id="GO:0016887">
    <property type="term" value="F:ATP hydrolysis activity"/>
    <property type="evidence" value="ECO:0007669"/>
    <property type="project" value="InterPro"/>
</dbReference>
<dbReference type="GO" id="GO:0140664">
    <property type="term" value="F:ATP-dependent DNA damage sensor activity"/>
    <property type="evidence" value="ECO:0007669"/>
    <property type="project" value="InterPro"/>
</dbReference>
<dbReference type="GO" id="GO:0004519">
    <property type="term" value="F:endonuclease activity"/>
    <property type="evidence" value="ECO:0007669"/>
    <property type="project" value="UniProtKB-UniRule"/>
</dbReference>
<dbReference type="GO" id="GO:0030983">
    <property type="term" value="F:mismatched DNA binding"/>
    <property type="evidence" value="ECO:0007669"/>
    <property type="project" value="InterPro"/>
</dbReference>
<dbReference type="GO" id="GO:0043023">
    <property type="term" value="F:ribosomal large subunit binding"/>
    <property type="evidence" value="ECO:0007669"/>
    <property type="project" value="UniProtKB-UniRule"/>
</dbReference>
<dbReference type="GO" id="GO:0019843">
    <property type="term" value="F:rRNA binding"/>
    <property type="evidence" value="ECO:0007669"/>
    <property type="project" value="UniProtKB-UniRule"/>
</dbReference>
<dbReference type="GO" id="GO:0006298">
    <property type="term" value="P:mismatch repair"/>
    <property type="evidence" value="ECO:0007669"/>
    <property type="project" value="InterPro"/>
</dbReference>
<dbReference type="GO" id="GO:0045910">
    <property type="term" value="P:negative regulation of DNA recombination"/>
    <property type="evidence" value="ECO:0007669"/>
    <property type="project" value="InterPro"/>
</dbReference>
<dbReference type="GO" id="GO:0072344">
    <property type="term" value="P:rescue of stalled ribosome"/>
    <property type="evidence" value="ECO:0007669"/>
    <property type="project" value="UniProtKB-UniRule"/>
</dbReference>
<dbReference type="FunFam" id="3.40.50.300:FF:000830">
    <property type="entry name" value="Endonuclease MutS2"/>
    <property type="match status" value="1"/>
</dbReference>
<dbReference type="Gene3D" id="3.30.1370.110">
    <property type="match status" value="1"/>
</dbReference>
<dbReference type="Gene3D" id="3.40.50.300">
    <property type="entry name" value="P-loop containing nucleotide triphosphate hydrolases"/>
    <property type="match status" value="1"/>
</dbReference>
<dbReference type="HAMAP" id="MF_00092">
    <property type="entry name" value="MutS2"/>
    <property type="match status" value="1"/>
</dbReference>
<dbReference type="InterPro" id="IPR000432">
    <property type="entry name" value="DNA_mismatch_repair_MutS_C"/>
</dbReference>
<dbReference type="InterPro" id="IPR007696">
    <property type="entry name" value="DNA_mismatch_repair_MutS_core"/>
</dbReference>
<dbReference type="InterPro" id="IPR036187">
    <property type="entry name" value="DNA_mismatch_repair_MutS_sf"/>
</dbReference>
<dbReference type="InterPro" id="IPR046893">
    <property type="entry name" value="MSSS"/>
</dbReference>
<dbReference type="InterPro" id="IPR045076">
    <property type="entry name" value="MutS"/>
</dbReference>
<dbReference type="InterPro" id="IPR005747">
    <property type="entry name" value="MutS2"/>
</dbReference>
<dbReference type="InterPro" id="IPR027417">
    <property type="entry name" value="P-loop_NTPase"/>
</dbReference>
<dbReference type="InterPro" id="IPR002625">
    <property type="entry name" value="Smr_dom"/>
</dbReference>
<dbReference type="InterPro" id="IPR036063">
    <property type="entry name" value="Smr_dom_sf"/>
</dbReference>
<dbReference type="NCBIfam" id="TIGR01069">
    <property type="entry name" value="mutS2"/>
    <property type="match status" value="1"/>
</dbReference>
<dbReference type="PANTHER" id="PTHR48466:SF2">
    <property type="entry name" value="OS10G0509000 PROTEIN"/>
    <property type="match status" value="1"/>
</dbReference>
<dbReference type="PANTHER" id="PTHR48466">
    <property type="entry name" value="OS10G0509000 PROTEIN-RELATED"/>
    <property type="match status" value="1"/>
</dbReference>
<dbReference type="Pfam" id="PF20297">
    <property type="entry name" value="MSSS"/>
    <property type="match status" value="1"/>
</dbReference>
<dbReference type="Pfam" id="PF00488">
    <property type="entry name" value="MutS_V"/>
    <property type="match status" value="1"/>
</dbReference>
<dbReference type="Pfam" id="PF01713">
    <property type="entry name" value="Smr"/>
    <property type="match status" value="1"/>
</dbReference>
<dbReference type="PIRSF" id="PIRSF005814">
    <property type="entry name" value="MutS_YshD"/>
    <property type="match status" value="1"/>
</dbReference>
<dbReference type="SMART" id="SM00534">
    <property type="entry name" value="MUTSac"/>
    <property type="match status" value="1"/>
</dbReference>
<dbReference type="SMART" id="SM00533">
    <property type="entry name" value="MUTSd"/>
    <property type="match status" value="1"/>
</dbReference>
<dbReference type="SMART" id="SM00463">
    <property type="entry name" value="SMR"/>
    <property type="match status" value="1"/>
</dbReference>
<dbReference type="SUPFAM" id="SSF48334">
    <property type="entry name" value="DNA repair protein MutS, domain III"/>
    <property type="match status" value="1"/>
</dbReference>
<dbReference type="SUPFAM" id="SSF52540">
    <property type="entry name" value="P-loop containing nucleoside triphosphate hydrolases"/>
    <property type="match status" value="1"/>
</dbReference>
<dbReference type="SUPFAM" id="SSF160443">
    <property type="entry name" value="SMR domain-like"/>
    <property type="match status" value="1"/>
</dbReference>
<dbReference type="PROSITE" id="PS00486">
    <property type="entry name" value="DNA_MISMATCH_REPAIR_2"/>
    <property type="match status" value="1"/>
</dbReference>
<dbReference type="PROSITE" id="PS50828">
    <property type="entry name" value="SMR"/>
    <property type="match status" value="1"/>
</dbReference>
<proteinExistence type="inferred from homology"/>
<name>MUTS2_STRE4</name>
<reference key="1">
    <citation type="journal article" date="2009" name="PLoS Pathog.">
        <title>Genomic evidence for the evolution of Streptococcus equi: host restriction, increased virulence, and genetic exchange with human pathogens.</title>
        <authorList>
            <person name="Holden M.T.G."/>
            <person name="Heather Z."/>
            <person name="Paillot R."/>
            <person name="Steward K.F."/>
            <person name="Webb K."/>
            <person name="Ainslie F."/>
            <person name="Jourdan T."/>
            <person name="Bason N.C."/>
            <person name="Holroyd N.E."/>
            <person name="Mungall K."/>
            <person name="Quail M.A."/>
            <person name="Sanders M."/>
            <person name="Simmonds M."/>
            <person name="Willey D."/>
            <person name="Brooks K."/>
            <person name="Aanensen D.M."/>
            <person name="Spratt B.G."/>
            <person name="Jolley K.A."/>
            <person name="Maiden M.C.J."/>
            <person name="Kehoe M."/>
            <person name="Chanter N."/>
            <person name="Bentley S.D."/>
            <person name="Robinson C."/>
            <person name="Maskell D.J."/>
            <person name="Parkhill J."/>
            <person name="Waller A.S."/>
        </authorList>
    </citation>
    <scope>NUCLEOTIDE SEQUENCE [LARGE SCALE GENOMIC DNA]</scope>
    <source>
        <strain>4047</strain>
    </source>
</reference>
<comment type="function">
    <text evidence="1">Endonuclease that is involved in the suppression of homologous recombination and thus may have a key role in the control of bacterial genetic diversity.</text>
</comment>
<comment type="function">
    <text evidence="1">Acts as a ribosome collision sensor, splitting the ribosome into its 2 subunits. Detects stalled/collided 70S ribosomes which it binds and splits by an ATP-hydrolysis driven conformational change. Acts upstream of the ribosome quality control system (RQC), a ribosome-associated complex that mediates the extraction of incompletely synthesized nascent chains from stalled ribosomes and their subsequent degradation. Probably generates substrates for RQC.</text>
</comment>
<comment type="subunit">
    <text evidence="1">Homodimer. Binds to stalled ribosomes, contacting rRNA.</text>
</comment>
<comment type="similarity">
    <text evidence="1">Belongs to the DNA mismatch repair MutS family. MutS2 subfamily.</text>
</comment>
<accession>C0MAV6</accession>
<feature type="chain" id="PRO_1000118566" description="Endonuclease MutS2">
    <location>
        <begin position="1"/>
        <end position="778"/>
    </location>
</feature>
<feature type="domain" description="Smr" evidence="1">
    <location>
        <begin position="703"/>
        <end position="778"/>
    </location>
</feature>
<feature type="binding site" evidence="1">
    <location>
        <begin position="328"/>
        <end position="335"/>
    </location>
    <ligand>
        <name>ATP</name>
        <dbReference type="ChEBI" id="CHEBI:30616"/>
    </ligand>
</feature>
<organism>
    <name type="scientific">Streptococcus equi subsp. equi (strain 4047)</name>
    <dbReference type="NCBI Taxonomy" id="553482"/>
    <lineage>
        <taxon>Bacteria</taxon>
        <taxon>Bacillati</taxon>
        <taxon>Bacillota</taxon>
        <taxon>Bacilli</taxon>
        <taxon>Lactobacillales</taxon>
        <taxon>Streptococcaceae</taxon>
        <taxon>Streptococcus</taxon>
    </lineage>
</organism>
<keyword id="KW-0067">ATP-binding</keyword>
<keyword id="KW-0238">DNA-binding</keyword>
<keyword id="KW-0255">Endonuclease</keyword>
<keyword id="KW-0378">Hydrolase</keyword>
<keyword id="KW-0540">Nuclease</keyword>
<keyword id="KW-0547">Nucleotide-binding</keyword>
<keyword id="KW-0694">RNA-binding</keyword>
<keyword id="KW-0699">rRNA-binding</keyword>
<sequence>MEKKILEQLEFEKVKEQFWPYLQTEQGQLELDLLEPIANKDKIQAYFTELEEMAAIFVEHHHFALGGLSDVSESMQRLDLEADLSIQELLAVKKLLQVSAEVCRFYADLENVDLVALKALFEKIESFPSLQGSLQAINDAGFVEGFASPELESIRRQISNKEHASRQLLQDILKKQAAYLSESLIASRNGRSVLPVKNTYRHKVAGVVHDMSASGSTVYIEPRALVSLNEELTQLQTDERHEIGRILHELSEQLRPHSRSLRNNAWLLGHLDLVRAKYLYMQAKQATVPVISDDKSLQLLNARHPLIQNPVANDLHFANDLAVIVITGPNTGGKTIMLKTLGLAQVMAQSGLPILADKGSRVAVFNGIYADIGDEQSIEQSLSTFSSHMTHIVEILNQADSDSLILFDELGAGTDPQEGASLAMAILEQLRLTNIKTMATTHYPELKAYGIETAYVENASMAFDNVSLKPTYRFMQGVPGRSNAFDIARRLGLAEHIVKEAQAMTATDHDVNRIIEQLEQQTLESRKRLEHIKEVEQDNLKFNRAVKKLYNEFSHAKDKELEKAALEAREIVDIALAESDSILSQLHEKAELKPHEIIEAKHRLKQLAPEQSLSQNKVLKKAKKWRAPRVGDDIIVTAYGQRGTLLAQLKDKRWEAQVGLIKLTLKEDEFSLVKLKEEAQQPKKRAVKVVKKAATGKGPRARLDLRGKRYEEAMQELDAFIDQALLNNMSQVDIIHGIGTGVIREAVGKYLRRNKHVKSFGYAPQNAGGSGCTIANLG</sequence>
<protein>
    <recommendedName>
        <fullName evidence="1">Endonuclease MutS2</fullName>
        <ecNumber evidence="1">3.1.-.-</ecNumber>
    </recommendedName>
    <alternativeName>
        <fullName evidence="1">Ribosome-associated protein quality control-upstream factor</fullName>
        <shortName evidence="1">RQC-upstream factor</shortName>
        <shortName evidence="1">RqcU</shortName>
        <ecNumber evidence="1">3.6.4.-</ecNumber>
    </alternativeName>
</protein>
<gene>
    <name evidence="1" type="primary">mutS2</name>
    <name evidence="1" type="synonym">rqcU</name>
    <name type="ordered locus">SEQ_0399</name>
</gene>
<evidence type="ECO:0000255" key="1">
    <source>
        <dbReference type="HAMAP-Rule" id="MF_00092"/>
    </source>
</evidence>